<reference key="1">
    <citation type="journal article" date="2007" name="Science">
        <title>The Fusarium graminearum genome reveals a link between localized polymorphism and pathogen specialization.</title>
        <authorList>
            <person name="Cuomo C.A."/>
            <person name="Gueldener U."/>
            <person name="Xu J.-R."/>
            <person name="Trail F."/>
            <person name="Turgeon B.G."/>
            <person name="Di Pietro A."/>
            <person name="Walton J.D."/>
            <person name="Ma L.-J."/>
            <person name="Baker S.E."/>
            <person name="Rep M."/>
            <person name="Adam G."/>
            <person name="Antoniw J."/>
            <person name="Baldwin T."/>
            <person name="Calvo S.E."/>
            <person name="Chang Y.-L."/>
            <person name="DeCaprio D."/>
            <person name="Gale L.R."/>
            <person name="Gnerre S."/>
            <person name="Goswami R.S."/>
            <person name="Hammond-Kosack K."/>
            <person name="Harris L.J."/>
            <person name="Hilburn K."/>
            <person name="Kennell J.C."/>
            <person name="Kroken S."/>
            <person name="Magnuson J.K."/>
            <person name="Mannhaupt G."/>
            <person name="Mauceli E.W."/>
            <person name="Mewes H.-W."/>
            <person name="Mitterbauer R."/>
            <person name="Muehlbauer G."/>
            <person name="Muensterkoetter M."/>
            <person name="Nelson D."/>
            <person name="O'Donnell K."/>
            <person name="Ouellet T."/>
            <person name="Qi W."/>
            <person name="Quesneville H."/>
            <person name="Roncero M.I.G."/>
            <person name="Seong K.-Y."/>
            <person name="Tetko I.V."/>
            <person name="Urban M."/>
            <person name="Waalwijk C."/>
            <person name="Ward T.J."/>
            <person name="Yao J."/>
            <person name="Birren B.W."/>
            <person name="Kistler H.C."/>
        </authorList>
    </citation>
    <scope>NUCLEOTIDE SEQUENCE [LARGE SCALE GENOMIC DNA]</scope>
    <source>
        <strain>ATCC MYA-4620 / CBS 123657 / FGSC 9075 / NRRL 31084 / PH-1</strain>
    </source>
</reference>
<reference key="2">
    <citation type="journal article" date="2010" name="Nature">
        <title>Comparative genomics reveals mobile pathogenicity chromosomes in Fusarium.</title>
        <authorList>
            <person name="Ma L.-J."/>
            <person name="van der Does H.C."/>
            <person name="Borkovich K.A."/>
            <person name="Coleman J.J."/>
            <person name="Daboussi M.-J."/>
            <person name="Di Pietro A."/>
            <person name="Dufresne M."/>
            <person name="Freitag M."/>
            <person name="Grabherr M."/>
            <person name="Henrissat B."/>
            <person name="Houterman P.M."/>
            <person name="Kang S."/>
            <person name="Shim W.-B."/>
            <person name="Woloshuk C."/>
            <person name="Xie X."/>
            <person name="Xu J.-R."/>
            <person name="Antoniw J."/>
            <person name="Baker S.E."/>
            <person name="Bluhm B.H."/>
            <person name="Breakspear A."/>
            <person name="Brown D.W."/>
            <person name="Butchko R.A.E."/>
            <person name="Chapman S."/>
            <person name="Coulson R."/>
            <person name="Coutinho P.M."/>
            <person name="Danchin E.G.J."/>
            <person name="Diener A."/>
            <person name="Gale L.R."/>
            <person name="Gardiner D.M."/>
            <person name="Goff S."/>
            <person name="Hammond-Kosack K.E."/>
            <person name="Hilburn K."/>
            <person name="Hua-Van A."/>
            <person name="Jonkers W."/>
            <person name="Kazan K."/>
            <person name="Kodira C.D."/>
            <person name="Koehrsen M."/>
            <person name="Kumar L."/>
            <person name="Lee Y.-H."/>
            <person name="Li L."/>
            <person name="Manners J.M."/>
            <person name="Miranda-Saavedra D."/>
            <person name="Mukherjee M."/>
            <person name="Park G."/>
            <person name="Park J."/>
            <person name="Park S.-Y."/>
            <person name="Proctor R.H."/>
            <person name="Regev A."/>
            <person name="Ruiz-Roldan M.C."/>
            <person name="Sain D."/>
            <person name="Sakthikumar S."/>
            <person name="Sykes S."/>
            <person name="Schwartz D.C."/>
            <person name="Turgeon B.G."/>
            <person name="Wapinski I."/>
            <person name="Yoder O."/>
            <person name="Young S."/>
            <person name="Zeng Q."/>
            <person name="Zhou S."/>
            <person name="Galagan J."/>
            <person name="Cuomo C.A."/>
            <person name="Kistler H.C."/>
            <person name="Rep M."/>
        </authorList>
    </citation>
    <scope>GENOME REANNOTATION</scope>
    <source>
        <strain>ATCC MYA-4620 / CBS 123657 / FGSC 9075 / NRRL 31084 / PH-1</strain>
    </source>
</reference>
<reference key="3">
    <citation type="journal article" date="2015" name="BMC Genomics">
        <title>The completed genome sequence of the pathogenic ascomycete fungus Fusarium graminearum.</title>
        <authorList>
            <person name="King R."/>
            <person name="Urban M."/>
            <person name="Hammond-Kosack M.C.U."/>
            <person name="Hassani-Pak K."/>
            <person name="Hammond-Kosack K.E."/>
        </authorList>
    </citation>
    <scope>NUCLEOTIDE SEQUENCE [LARGE SCALE GENOMIC DNA]</scope>
    <source>
        <strain>ATCC MYA-4620 / CBS 123657 / FGSC 9075 / NRRL 31084 / PH-1</strain>
    </source>
</reference>
<name>H2AZ_GIBZE</name>
<dbReference type="EMBL" id="DS231663">
    <property type="protein sequence ID" value="ESU06966.1"/>
    <property type="molecule type" value="Genomic_DNA"/>
</dbReference>
<dbReference type="EMBL" id="HG970332">
    <property type="protein sequence ID" value="CEF73793.1"/>
    <property type="molecule type" value="Genomic_DNA"/>
</dbReference>
<dbReference type="RefSeq" id="XP_011317451.1">
    <property type="nucleotide sequence ID" value="XM_011319149.1"/>
</dbReference>
<dbReference type="SMR" id="Q4IMD1"/>
<dbReference type="FunCoup" id="Q4IMD1">
    <property type="interactions" value="1058"/>
</dbReference>
<dbReference type="STRING" id="229533.Q4IMD1"/>
<dbReference type="GeneID" id="23549057"/>
<dbReference type="KEGG" id="fgr:FGSG_01627"/>
<dbReference type="VEuPathDB" id="FungiDB:FGRAMPH1_01G03973"/>
<dbReference type="eggNOG" id="KOG1757">
    <property type="taxonomic scope" value="Eukaryota"/>
</dbReference>
<dbReference type="HOGENOM" id="CLU_062828_2_1_1"/>
<dbReference type="InParanoid" id="Q4IMD1"/>
<dbReference type="OrthoDB" id="96002at110618"/>
<dbReference type="Proteomes" id="UP000070720">
    <property type="component" value="Chromosome 1"/>
</dbReference>
<dbReference type="GO" id="GO:0000786">
    <property type="term" value="C:nucleosome"/>
    <property type="evidence" value="ECO:0007669"/>
    <property type="project" value="UniProtKB-KW"/>
</dbReference>
<dbReference type="GO" id="GO:0005634">
    <property type="term" value="C:nucleus"/>
    <property type="evidence" value="ECO:0007669"/>
    <property type="project" value="UniProtKB-SubCell"/>
</dbReference>
<dbReference type="GO" id="GO:0003677">
    <property type="term" value="F:DNA binding"/>
    <property type="evidence" value="ECO:0007669"/>
    <property type="project" value="UniProtKB-KW"/>
</dbReference>
<dbReference type="GO" id="GO:0046982">
    <property type="term" value="F:protein heterodimerization activity"/>
    <property type="evidence" value="ECO:0007669"/>
    <property type="project" value="InterPro"/>
</dbReference>
<dbReference type="GO" id="GO:0030527">
    <property type="term" value="F:structural constituent of chromatin"/>
    <property type="evidence" value="ECO:0007669"/>
    <property type="project" value="InterPro"/>
</dbReference>
<dbReference type="GO" id="GO:0006325">
    <property type="term" value="P:chromatin organization"/>
    <property type="evidence" value="ECO:0007669"/>
    <property type="project" value="UniProtKB-KW"/>
</dbReference>
<dbReference type="CDD" id="cd00074">
    <property type="entry name" value="HFD_H2A"/>
    <property type="match status" value="1"/>
</dbReference>
<dbReference type="FunFam" id="1.10.20.10:FF:000021">
    <property type="entry name" value="Histone H2A"/>
    <property type="match status" value="1"/>
</dbReference>
<dbReference type="Gene3D" id="1.10.20.10">
    <property type="entry name" value="Histone, subunit A"/>
    <property type="match status" value="1"/>
</dbReference>
<dbReference type="InterPro" id="IPR009072">
    <property type="entry name" value="Histone-fold"/>
</dbReference>
<dbReference type="InterPro" id="IPR002119">
    <property type="entry name" value="Histone_H2A"/>
</dbReference>
<dbReference type="InterPro" id="IPR007125">
    <property type="entry name" value="Histone_H2A/H2B/H3"/>
</dbReference>
<dbReference type="InterPro" id="IPR032454">
    <property type="entry name" value="Histone_H2A_C"/>
</dbReference>
<dbReference type="PANTHER" id="PTHR23430">
    <property type="entry name" value="HISTONE H2A"/>
    <property type="match status" value="1"/>
</dbReference>
<dbReference type="Pfam" id="PF00125">
    <property type="entry name" value="Histone"/>
    <property type="match status" value="1"/>
</dbReference>
<dbReference type="Pfam" id="PF16211">
    <property type="entry name" value="Histone_H2A_C"/>
    <property type="match status" value="1"/>
</dbReference>
<dbReference type="PRINTS" id="PR00620">
    <property type="entry name" value="HISTONEH2A"/>
</dbReference>
<dbReference type="SMART" id="SM00414">
    <property type="entry name" value="H2A"/>
    <property type="match status" value="1"/>
</dbReference>
<dbReference type="SUPFAM" id="SSF47113">
    <property type="entry name" value="Histone-fold"/>
    <property type="match status" value="1"/>
</dbReference>
<keyword id="KW-0007">Acetylation</keyword>
<keyword id="KW-0010">Activator</keyword>
<keyword id="KW-0156">Chromatin regulator</keyword>
<keyword id="KW-0158">Chromosome</keyword>
<keyword id="KW-0238">DNA-binding</keyword>
<keyword id="KW-0544">Nucleosome core</keyword>
<keyword id="KW-0539">Nucleus</keyword>
<keyword id="KW-1185">Reference proteome</keyword>
<keyword id="KW-0804">Transcription</keyword>
<keyword id="KW-0805">Transcription regulation</keyword>
<organism>
    <name type="scientific">Gibberella zeae (strain ATCC MYA-4620 / CBS 123657 / FGSC 9075 / NRRL 31084 / PH-1)</name>
    <name type="common">Wheat head blight fungus</name>
    <name type="synonym">Fusarium graminearum</name>
    <dbReference type="NCBI Taxonomy" id="229533"/>
    <lineage>
        <taxon>Eukaryota</taxon>
        <taxon>Fungi</taxon>
        <taxon>Dikarya</taxon>
        <taxon>Ascomycota</taxon>
        <taxon>Pezizomycotina</taxon>
        <taxon>Sordariomycetes</taxon>
        <taxon>Hypocreomycetidae</taxon>
        <taxon>Hypocreales</taxon>
        <taxon>Nectriaceae</taxon>
        <taxon>Fusarium</taxon>
    </lineage>
</organism>
<feature type="chain" id="PRO_0000055334" description="Histone H2A.Z">
    <location>
        <begin position="1"/>
        <end position="144"/>
    </location>
</feature>
<feature type="region of interest" description="Disordered" evidence="2">
    <location>
        <begin position="1"/>
        <end position="36"/>
    </location>
</feature>
<feature type="compositionally biased region" description="Gly residues" evidence="2">
    <location>
        <begin position="1"/>
        <end position="18"/>
    </location>
</feature>
<feature type="modified residue" description="N6-acetyllysine" evidence="1">
    <location>
        <position position="5"/>
    </location>
</feature>
<feature type="modified residue" description="N6-acetyllysine" evidence="1">
    <location>
        <position position="12"/>
    </location>
</feature>
<gene>
    <name type="primary">HTZ1</name>
    <name type="ORF">FGRRES_01627</name>
    <name type="ORF">FGSG_01627</name>
</gene>
<comment type="function">
    <text evidence="1">Variant histone H2A which can replace H2A in some nucleosomes. Nucleosomes wrap and compact DNA into chromatin, limiting DNA accessibility to the cellular machineries which require DNA as a template. Histones thereby play a central role in transcription regulation, DNA repair, DNA replication and chromosomal stability. DNA accessibility is regulated via a complex set of post-translational modifications of histones, also called histone code, and nucleosome remodeling. This variant is enriched at promoters, it may keep them in a repressed state until the appropriate activation signal is received. Near telomeres, it may counteract gene silencing caused by the spread of heterochromatin proteins. Required for the RNA polymerase II and SPT15/TBP recruitment to the target genes. Involved in chromosome stability (By similarity).</text>
</comment>
<comment type="subunit">
    <text evidence="1">The nucleosome is a histone octamer containing two molecules each of H2A, H2B, H3 and H4 assembled in one H3-H4 heterotetramer and two H2A-H2B heterodimers. The octamer wraps approximately 147 bp of DNA. H2A or its variant H2A.Z forms a heterodimer with H2B. H2A.Z associates with the VPS72/SWC2 subunit of the SWR1 chromatin remodeling complex. Also interacts with RBP1/DNA-directed RNA polymerase II largest subunit (By similarity).</text>
</comment>
<comment type="subcellular location">
    <subcellularLocation>
        <location evidence="1">Nucleus</location>
    </subcellularLocation>
    <subcellularLocation>
        <location evidence="1">Chromosome</location>
    </subcellularLocation>
</comment>
<comment type="PTM">
    <text evidence="1">Acetylated once deposited into chromatin.</text>
</comment>
<comment type="similarity">
    <text evidence="3">Belongs to the histone H2A family.</text>
</comment>
<proteinExistence type="inferred from homology"/>
<evidence type="ECO:0000250" key="1"/>
<evidence type="ECO:0000256" key="2">
    <source>
        <dbReference type="SAM" id="MobiDB-lite"/>
    </source>
</evidence>
<evidence type="ECO:0000305" key="3"/>
<accession>Q4IMD1</accession>
<accession>A0A0E0RRB8</accession>
<accession>V6QXH7</accession>
<protein>
    <recommendedName>
        <fullName>Histone H2A.Z</fullName>
    </recommendedName>
</protein>
<sequence length="144" mass="15405">MPGGKGKSSGGKSSGGKTSGTEGANKKQQSHSARAGLQFPCGRVKRFLKQNTQQKMRVGAKAAVYVTAVLEYLTAEVLELAGNAAKDLKVKRITPRHLQLAIRGDEELDTLIRATIAYGGVLPHINRALLLKVEQKKKAKALEG</sequence>